<organism>
    <name type="scientific">Arabidopsis thaliana</name>
    <name type="common">Mouse-ear cress</name>
    <dbReference type="NCBI Taxonomy" id="3702"/>
    <lineage>
        <taxon>Eukaryota</taxon>
        <taxon>Viridiplantae</taxon>
        <taxon>Streptophyta</taxon>
        <taxon>Embryophyta</taxon>
        <taxon>Tracheophyta</taxon>
        <taxon>Spermatophyta</taxon>
        <taxon>Magnoliopsida</taxon>
        <taxon>eudicotyledons</taxon>
        <taxon>Gunneridae</taxon>
        <taxon>Pentapetalae</taxon>
        <taxon>rosids</taxon>
        <taxon>malvids</taxon>
        <taxon>Brassicales</taxon>
        <taxon>Brassicaceae</taxon>
        <taxon>Camelineae</taxon>
        <taxon>Arabidopsis</taxon>
    </lineage>
</organism>
<keyword id="KW-0025">Alternative splicing</keyword>
<keyword id="KW-0150">Chloroplast</keyword>
<keyword id="KW-0275">Fatty acid biosynthesis</keyword>
<keyword id="KW-0276">Fatty acid metabolism</keyword>
<keyword id="KW-0444">Lipid biosynthesis</keyword>
<keyword id="KW-0443">Lipid metabolism</keyword>
<keyword id="KW-0596">Phosphopantetheine</keyword>
<keyword id="KW-0597">Phosphoprotein</keyword>
<keyword id="KW-0611">Plant defense</keyword>
<keyword id="KW-0934">Plastid</keyword>
<keyword id="KW-1185">Reference proteome</keyword>
<keyword id="KW-0809">Transit peptide</keyword>
<protein>
    <recommendedName>
        <fullName>Acyl carrier protein 4, chloroplastic</fullName>
    </recommendedName>
</protein>
<dbReference type="EMBL" id="AL035523">
    <property type="protein sequence ID" value="CAB36747.1"/>
    <property type="molecule type" value="Genomic_DNA"/>
</dbReference>
<dbReference type="EMBL" id="AL161562">
    <property type="protein sequence ID" value="CAB79414.1"/>
    <property type="molecule type" value="Genomic_DNA"/>
</dbReference>
<dbReference type="EMBL" id="CP002687">
    <property type="protein sequence ID" value="AEE84996.1"/>
    <property type="molecule type" value="Genomic_DNA"/>
</dbReference>
<dbReference type="EMBL" id="AY039527">
    <property type="protein sequence ID" value="AAK62583.1"/>
    <property type="molecule type" value="mRNA"/>
</dbReference>
<dbReference type="EMBL" id="AY050471">
    <property type="protein sequence ID" value="AAK91484.1"/>
    <property type="molecule type" value="mRNA"/>
</dbReference>
<dbReference type="EMBL" id="AY084704">
    <property type="protein sequence ID" value="AAM61278.1"/>
    <property type="molecule type" value="mRNA"/>
</dbReference>
<dbReference type="PIR" id="T05526">
    <property type="entry name" value="T05526"/>
</dbReference>
<dbReference type="RefSeq" id="NP_194235.1">
    <molecule id="Q9SW21-1"/>
    <property type="nucleotide sequence ID" value="NM_118637.4"/>
</dbReference>
<dbReference type="SMR" id="Q9SW21"/>
<dbReference type="FunCoup" id="Q9SW21">
    <property type="interactions" value="1899"/>
</dbReference>
<dbReference type="IntAct" id="Q9SW21">
    <property type="interactions" value="1"/>
</dbReference>
<dbReference type="STRING" id="3702.Q9SW21"/>
<dbReference type="PaxDb" id="3702-AT4G25050.2"/>
<dbReference type="ProMEX" id="Q9SW21"/>
<dbReference type="ProteomicsDB" id="244360">
    <molecule id="Q9SW21-1"/>
</dbReference>
<dbReference type="EnsemblPlants" id="AT4G25050.1">
    <molecule id="Q9SW21-1"/>
    <property type="protein sequence ID" value="AT4G25050.1"/>
    <property type="gene ID" value="AT4G25050"/>
</dbReference>
<dbReference type="GeneID" id="828608"/>
<dbReference type="Gramene" id="AT4G25050.1">
    <molecule id="Q9SW21-1"/>
    <property type="protein sequence ID" value="AT4G25050.1"/>
    <property type="gene ID" value="AT4G25050"/>
</dbReference>
<dbReference type="KEGG" id="ath:AT4G25050"/>
<dbReference type="Araport" id="AT4G25050"/>
<dbReference type="TAIR" id="AT4G25050">
    <property type="gene designation" value="ACP4"/>
</dbReference>
<dbReference type="eggNOG" id="KOG1748">
    <property type="taxonomic scope" value="Eukaryota"/>
</dbReference>
<dbReference type="InParanoid" id="Q9SW21"/>
<dbReference type="OrthoDB" id="448946at2759"/>
<dbReference type="PhylomeDB" id="Q9SW21"/>
<dbReference type="PRO" id="PR:Q9SW21"/>
<dbReference type="Proteomes" id="UP000006548">
    <property type="component" value="Chromosome 4"/>
</dbReference>
<dbReference type="ExpressionAtlas" id="Q9SW21">
    <property type="expression patterns" value="baseline and differential"/>
</dbReference>
<dbReference type="GO" id="GO:0009507">
    <property type="term" value="C:chloroplast"/>
    <property type="evidence" value="ECO:0007669"/>
    <property type="project" value="UniProtKB-SubCell"/>
</dbReference>
<dbReference type="GO" id="GO:0000036">
    <property type="term" value="F:acyl carrier activity"/>
    <property type="evidence" value="ECO:0007669"/>
    <property type="project" value="InterPro"/>
</dbReference>
<dbReference type="GO" id="GO:0042335">
    <property type="term" value="P:cuticle development"/>
    <property type="evidence" value="ECO:0000315"/>
    <property type="project" value="UniProtKB"/>
</dbReference>
<dbReference type="GO" id="GO:0006633">
    <property type="term" value="P:fatty acid biosynthetic process"/>
    <property type="evidence" value="ECO:0000315"/>
    <property type="project" value="UniProtKB"/>
</dbReference>
<dbReference type="GO" id="GO:0009627">
    <property type="term" value="P:systemic acquired resistance"/>
    <property type="evidence" value="ECO:0000315"/>
    <property type="project" value="UniProtKB"/>
</dbReference>
<dbReference type="FunFam" id="1.10.1200.10:FF:000017">
    <property type="entry name" value="Acyl carrier protein"/>
    <property type="match status" value="1"/>
</dbReference>
<dbReference type="Gene3D" id="1.10.1200.10">
    <property type="entry name" value="ACP-like"/>
    <property type="match status" value="1"/>
</dbReference>
<dbReference type="HAMAP" id="MF_01217">
    <property type="entry name" value="Acyl_carrier"/>
    <property type="match status" value="1"/>
</dbReference>
<dbReference type="InterPro" id="IPR003231">
    <property type="entry name" value="ACP"/>
</dbReference>
<dbReference type="InterPro" id="IPR036736">
    <property type="entry name" value="ACP-like_sf"/>
</dbReference>
<dbReference type="InterPro" id="IPR044813">
    <property type="entry name" value="ACP_chloroplastic"/>
</dbReference>
<dbReference type="InterPro" id="IPR009081">
    <property type="entry name" value="PP-bd_ACP"/>
</dbReference>
<dbReference type="InterPro" id="IPR006162">
    <property type="entry name" value="Ppantetheine_attach_site"/>
</dbReference>
<dbReference type="NCBIfam" id="TIGR00517">
    <property type="entry name" value="acyl_carrier"/>
    <property type="match status" value="1"/>
</dbReference>
<dbReference type="PANTHER" id="PTHR46153">
    <property type="entry name" value="ACYL CARRIER PROTEIN"/>
    <property type="match status" value="1"/>
</dbReference>
<dbReference type="PANTHER" id="PTHR46153:SF11">
    <property type="entry name" value="ACYL CARRIER PROTEIN 4, CHLOROPLASTIC"/>
    <property type="match status" value="1"/>
</dbReference>
<dbReference type="Pfam" id="PF00550">
    <property type="entry name" value="PP-binding"/>
    <property type="match status" value="1"/>
</dbReference>
<dbReference type="SUPFAM" id="SSF47336">
    <property type="entry name" value="ACP-like"/>
    <property type="match status" value="1"/>
</dbReference>
<dbReference type="PROSITE" id="PS50075">
    <property type="entry name" value="CARRIER"/>
    <property type="match status" value="1"/>
</dbReference>
<dbReference type="PROSITE" id="PS00012">
    <property type="entry name" value="PHOSPHOPANTETHEINE"/>
    <property type="match status" value="1"/>
</dbReference>
<name>ACP4_ARATH</name>
<sequence>MASLSTTSLSFKAPSTTISQVLRKASSSQSVTFGRFTSSTKSLRLQISCAAKAETVQKVSDIVKEQLALAADVPLTAESKFSALGADSLDTVEIVMALEEKFNISVEESDAQNITTIQEAADLIEDLVQKKPAAETS</sequence>
<gene>
    <name type="primary">ACP4</name>
    <name type="synonym">ACL1.4</name>
    <name type="ordered locus">At4g25050</name>
    <name type="ORF">F13M23.190</name>
</gene>
<accession>Q9SW21</accession>
<evidence type="ECO:0000250" key="1"/>
<evidence type="ECO:0000255" key="2"/>
<evidence type="ECO:0000255" key="3">
    <source>
        <dbReference type="PROSITE-ProRule" id="PRU00258"/>
    </source>
</evidence>
<evidence type="ECO:0000269" key="4">
    <source>
    </source>
</evidence>
<evidence type="ECO:0000269" key="5">
    <source>
    </source>
</evidence>
<evidence type="ECO:0000269" key="6">
    <source>
    </source>
</evidence>
<evidence type="ECO:0000305" key="7"/>
<feature type="transit peptide" description="Chloroplast" evidence="2">
    <location>
        <begin position="1"/>
        <end position="48"/>
    </location>
</feature>
<feature type="chain" id="PRO_0000418156" description="Acyl carrier protein 4, chloroplastic">
    <location>
        <begin position="49"/>
        <end position="137"/>
    </location>
</feature>
<feature type="domain" description="Carrier" evidence="3">
    <location>
        <begin position="53"/>
        <end position="128"/>
    </location>
</feature>
<feature type="modified residue" description="O-(pantetheine 4'-phosphoryl)serine" evidence="3">
    <location>
        <position position="88"/>
    </location>
</feature>
<proteinExistence type="evidence at transcript level"/>
<reference key="1">
    <citation type="journal article" date="1999" name="Nature">
        <title>Sequence and analysis of chromosome 4 of the plant Arabidopsis thaliana.</title>
        <authorList>
            <person name="Mayer K.F.X."/>
            <person name="Schueller C."/>
            <person name="Wambutt R."/>
            <person name="Murphy G."/>
            <person name="Volckaert G."/>
            <person name="Pohl T."/>
            <person name="Duesterhoeft A."/>
            <person name="Stiekema W."/>
            <person name="Entian K.-D."/>
            <person name="Terryn N."/>
            <person name="Harris B."/>
            <person name="Ansorge W."/>
            <person name="Brandt P."/>
            <person name="Grivell L.A."/>
            <person name="Rieger M."/>
            <person name="Weichselgartner M."/>
            <person name="de Simone V."/>
            <person name="Obermaier B."/>
            <person name="Mache R."/>
            <person name="Mueller M."/>
            <person name="Kreis M."/>
            <person name="Delseny M."/>
            <person name="Puigdomenech P."/>
            <person name="Watson M."/>
            <person name="Schmidtheini T."/>
            <person name="Reichert B."/>
            <person name="Portetelle D."/>
            <person name="Perez-Alonso M."/>
            <person name="Boutry M."/>
            <person name="Bancroft I."/>
            <person name="Vos P."/>
            <person name="Hoheisel J."/>
            <person name="Zimmermann W."/>
            <person name="Wedler H."/>
            <person name="Ridley P."/>
            <person name="Langham S.-A."/>
            <person name="McCullagh B."/>
            <person name="Bilham L."/>
            <person name="Robben J."/>
            <person name="van der Schueren J."/>
            <person name="Grymonprez B."/>
            <person name="Chuang Y.-J."/>
            <person name="Vandenbussche F."/>
            <person name="Braeken M."/>
            <person name="Weltjens I."/>
            <person name="Voet M."/>
            <person name="Bastiaens I."/>
            <person name="Aert R."/>
            <person name="Defoor E."/>
            <person name="Weitzenegger T."/>
            <person name="Bothe G."/>
            <person name="Ramsperger U."/>
            <person name="Hilbert H."/>
            <person name="Braun M."/>
            <person name="Holzer E."/>
            <person name="Brandt A."/>
            <person name="Peters S."/>
            <person name="van Staveren M."/>
            <person name="Dirkse W."/>
            <person name="Mooijman P."/>
            <person name="Klein Lankhorst R."/>
            <person name="Rose M."/>
            <person name="Hauf J."/>
            <person name="Koetter P."/>
            <person name="Berneiser S."/>
            <person name="Hempel S."/>
            <person name="Feldpausch M."/>
            <person name="Lamberth S."/>
            <person name="Van den Daele H."/>
            <person name="De Keyser A."/>
            <person name="Buysshaert C."/>
            <person name="Gielen J."/>
            <person name="Villarroel R."/>
            <person name="De Clercq R."/>
            <person name="van Montagu M."/>
            <person name="Rogers J."/>
            <person name="Cronin A."/>
            <person name="Quail M.A."/>
            <person name="Bray-Allen S."/>
            <person name="Clark L."/>
            <person name="Doggett J."/>
            <person name="Hall S."/>
            <person name="Kay M."/>
            <person name="Lennard N."/>
            <person name="McLay K."/>
            <person name="Mayes R."/>
            <person name="Pettett A."/>
            <person name="Rajandream M.A."/>
            <person name="Lyne M."/>
            <person name="Benes V."/>
            <person name="Rechmann S."/>
            <person name="Borkova D."/>
            <person name="Bloecker H."/>
            <person name="Scharfe M."/>
            <person name="Grimm M."/>
            <person name="Loehnert T.-H."/>
            <person name="Dose S."/>
            <person name="de Haan M."/>
            <person name="Maarse A.C."/>
            <person name="Schaefer M."/>
            <person name="Mueller-Auer S."/>
            <person name="Gabel C."/>
            <person name="Fuchs M."/>
            <person name="Fartmann B."/>
            <person name="Granderath K."/>
            <person name="Dauner D."/>
            <person name="Herzl A."/>
            <person name="Neumann S."/>
            <person name="Argiriou A."/>
            <person name="Vitale D."/>
            <person name="Liguori R."/>
            <person name="Piravandi E."/>
            <person name="Massenet O."/>
            <person name="Quigley F."/>
            <person name="Clabauld G."/>
            <person name="Muendlein A."/>
            <person name="Felber R."/>
            <person name="Schnabl S."/>
            <person name="Hiller R."/>
            <person name="Schmidt W."/>
            <person name="Lecharny A."/>
            <person name="Aubourg S."/>
            <person name="Chefdor F."/>
            <person name="Cooke R."/>
            <person name="Berger C."/>
            <person name="Monfort A."/>
            <person name="Casacuberta E."/>
            <person name="Gibbons T."/>
            <person name="Weber N."/>
            <person name="Vandenbol M."/>
            <person name="Bargues M."/>
            <person name="Terol J."/>
            <person name="Torres A."/>
            <person name="Perez-Perez A."/>
            <person name="Purnelle B."/>
            <person name="Bent E."/>
            <person name="Johnson S."/>
            <person name="Tacon D."/>
            <person name="Jesse T."/>
            <person name="Heijnen L."/>
            <person name="Schwarz S."/>
            <person name="Scholler P."/>
            <person name="Heber S."/>
            <person name="Francs P."/>
            <person name="Bielke C."/>
            <person name="Frishman D."/>
            <person name="Haase D."/>
            <person name="Lemcke K."/>
            <person name="Mewes H.-W."/>
            <person name="Stocker S."/>
            <person name="Zaccaria P."/>
            <person name="Bevan M."/>
            <person name="Wilson R.K."/>
            <person name="de la Bastide M."/>
            <person name="Habermann K."/>
            <person name="Parnell L."/>
            <person name="Dedhia N."/>
            <person name="Gnoj L."/>
            <person name="Schutz K."/>
            <person name="Huang E."/>
            <person name="Spiegel L."/>
            <person name="Sekhon M."/>
            <person name="Murray J."/>
            <person name="Sheet P."/>
            <person name="Cordes M."/>
            <person name="Abu-Threideh J."/>
            <person name="Stoneking T."/>
            <person name="Kalicki J."/>
            <person name="Graves T."/>
            <person name="Harmon G."/>
            <person name="Edwards J."/>
            <person name="Latreille P."/>
            <person name="Courtney L."/>
            <person name="Cloud J."/>
            <person name="Abbott A."/>
            <person name="Scott K."/>
            <person name="Johnson D."/>
            <person name="Minx P."/>
            <person name="Bentley D."/>
            <person name="Fulton B."/>
            <person name="Miller N."/>
            <person name="Greco T."/>
            <person name="Kemp K."/>
            <person name="Kramer J."/>
            <person name="Fulton L."/>
            <person name="Mardis E."/>
            <person name="Dante M."/>
            <person name="Pepin K."/>
            <person name="Hillier L.W."/>
            <person name="Nelson J."/>
            <person name="Spieth J."/>
            <person name="Ryan E."/>
            <person name="Andrews S."/>
            <person name="Geisel C."/>
            <person name="Layman D."/>
            <person name="Du H."/>
            <person name="Ali J."/>
            <person name="Berghoff A."/>
            <person name="Jones K."/>
            <person name="Drone K."/>
            <person name="Cotton M."/>
            <person name="Joshu C."/>
            <person name="Antonoiu B."/>
            <person name="Zidanic M."/>
            <person name="Strong C."/>
            <person name="Sun H."/>
            <person name="Lamar B."/>
            <person name="Yordan C."/>
            <person name="Ma P."/>
            <person name="Zhong J."/>
            <person name="Preston R."/>
            <person name="Vil D."/>
            <person name="Shekher M."/>
            <person name="Matero A."/>
            <person name="Shah R."/>
            <person name="Swaby I.K."/>
            <person name="O'Shaughnessy A."/>
            <person name="Rodriguez M."/>
            <person name="Hoffman J."/>
            <person name="Till S."/>
            <person name="Granat S."/>
            <person name="Shohdy N."/>
            <person name="Hasegawa A."/>
            <person name="Hameed A."/>
            <person name="Lodhi M."/>
            <person name="Johnson A."/>
            <person name="Chen E."/>
            <person name="Marra M.A."/>
            <person name="Martienssen R."/>
            <person name="McCombie W.R."/>
        </authorList>
    </citation>
    <scope>NUCLEOTIDE SEQUENCE [LARGE SCALE GENOMIC DNA]</scope>
    <source>
        <strain>cv. Columbia</strain>
    </source>
</reference>
<reference key="2">
    <citation type="journal article" date="2017" name="Plant J.">
        <title>Araport11: a complete reannotation of the Arabidopsis thaliana reference genome.</title>
        <authorList>
            <person name="Cheng C.Y."/>
            <person name="Krishnakumar V."/>
            <person name="Chan A.P."/>
            <person name="Thibaud-Nissen F."/>
            <person name="Schobel S."/>
            <person name="Town C.D."/>
        </authorList>
    </citation>
    <scope>GENOME REANNOTATION</scope>
    <source>
        <strain>cv. Columbia</strain>
    </source>
</reference>
<reference key="3">
    <citation type="journal article" date="2003" name="Science">
        <title>Empirical analysis of transcriptional activity in the Arabidopsis genome.</title>
        <authorList>
            <person name="Yamada K."/>
            <person name="Lim J."/>
            <person name="Dale J.M."/>
            <person name="Chen H."/>
            <person name="Shinn P."/>
            <person name="Palm C.J."/>
            <person name="Southwick A.M."/>
            <person name="Wu H.C."/>
            <person name="Kim C.J."/>
            <person name="Nguyen M."/>
            <person name="Pham P.K."/>
            <person name="Cheuk R.F."/>
            <person name="Karlin-Newmann G."/>
            <person name="Liu S.X."/>
            <person name="Lam B."/>
            <person name="Sakano H."/>
            <person name="Wu T."/>
            <person name="Yu G."/>
            <person name="Miranda M."/>
            <person name="Quach H.L."/>
            <person name="Tripp M."/>
            <person name="Chang C.H."/>
            <person name="Lee J.M."/>
            <person name="Toriumi M.J."/>
            <person name="Chan M.M."/>
            <person name="Tang C.C."/>
            <person name="Onodera C.S."/>
            <person name="Deng J.M."/>
            <person name="Akiyama K."/>
            <person name="Ansari Y."/>
            <person name="Arakawa T."/>
            <person name="Banh J."/>
            <person name="Banno F."/>
            <person name="Bowser L."/>
            <person name="Brooks S.Y."/>
            <person name="Carninci P."/>
            <person name="Chao Q."/>
            <person name="Choy N."/>
            <person name="Enju A."/>
            <person name="Goldsmith A.D."/>
            <person name="Gurjal M."/>
            <person name="Hansen N.F."/>
            <person name="Hayashizaki Y."/>
            <person name="Johnson-Hopson C."/>
            <person name="Hsuan V.W."/>
            <person name="Iida K."/>
            <person name="Karnes M."/>
            <person name="Khan S."/>
            <person name="Koesema E."/>
            <person name="Ishida J."/>
            <person name="Jiang P.X."/>
            <person name="Jones T."/>
            <person name="Kawai J."/>
            <person name="Kamiya A."/>
            <person name="Meyers C."/>
            <person name="Nakajima M."/>
            <person name="Narusaka M."/>
            <person name="Seki M."/>
            <person name="Sakurai T."/>
            <person name="Satou M."/>
            <person name="Tamse R."/>
            <person name="Vaysberg M."/>
            <person name="Wallender E.K."/>
            <person name="Wong C."/>
            <person name="Yamamura Y."/>
            <person name="Yuan S."/>
            <person name="Shinozaki K."/>
            <person name="Davis R.W."/>
            <person name="Theologis A."/>
            <person name="Ecker J.R."/>
        </authorList>
    </citation>
    <scope>NUCLEOTIDE SEQUENCE [LARGE SCALE MRNA]</scope>
    <source>
        <strain>cv. Columbia</strain>
    </source>
</reference>
<reference key="4">
    <citation type="submission" date="2002-03" db="EMBL/GenBank/DDBJ databases">
        <title>Full-length cDNA from Arabidopsis thaliana.</title>
        <authorList>
            <person name="Brover V.V."/>
            <person name="Troukhan M.E."/>
            <person name="Alexandrov N.A."/>
            <person name="Lu Y.-P."/>
            <person name="Flavell R.B."/>
            <person name="Feldmann K.A."/>
        </authorList>
    </citation>
    <scope>NUCLEOTIDE SEQUENCE [LARGE SCALE MRNA]</scope>
</reference>
<reference key="5">
    <citation type="journal article" date="2002" name="Plant Physiol.">
        <title>Differential regulation of mRNA levels of acyl carrier protein isoforms in Arabidopsis.</title>
        <authorList>
            <person name="Bonaventure G."/>
            <person name="Ohlrogge J.B."/>
        </authorList>
    </citation>
    <scope>INDUCTION</scope>
</reference>
<reference key="6">
    <citation type="journal article" date="2003" name="Plant Physiol.">
        <title>Expression of antisense acyl carrier protein-4 reduces lipid content in Arabidopsis leaf tissue.</title>
        <authorList>
            <person name="Branen J.K."/>
            <person name="Shintani D.K."/>
            <person name="Engeseth N.J."/>
        </authorList>
    </citation>
    <scope>FUNCTION</scope>
</reference>
<reference key="7">
    <citation type="journal article" date="2009" name="Cell Host Microbe">
        <title>An intact cuticle in distal tissues is essential for the induction of systemic acquired resistance in plants.</title>
        <authorList>
            <person name="Xia Y."/>
            <person name="Gao Q.M."/>
            <person name="Yu K."/>
            <person name="Lapchyk L."/>
            <person name="Navarre D."/>
            <person name="Hildebrand D."/>
            <person name="Kachroo A."/>
            <person name="Kachroo P."/>
        </authorList>
    </citation>
    <scope>FUNCTION</scope>
    <scope>DISRUPTION PHENOTYPE</scope>
</reference>
<comment type="function">
    <text evidence="5 6">Carrier of the growing fatty acid chain in fatty acid biosynthesis that plays a major role in the biosynthesis of fatty acids in leaves. Required for the biosynthesis of chloroplast photosynthetic membrane lipids such as monogalactosyldiacylglycerol, digalactosyldiacylglycerol and phosphatidylglycerol. Is essential for the biosynthesis of the cuticular wax and cutin polymers in leaves, and for the establishment of systemic acquired resistance (SAR).</text>
</comment>
<comment type="subcellular location">
    <subcellularLocation>
        <location evidence="7">Plastid</location>
        <location evidence="7">Chloroplast</location>
    </subcellularLocation>
</comment>
<comment type="alternative products">
    <event type="alternative splicing"/>
    <isoform>
        <id>Q9SW21-1</id>
        <name>1</name>
        <sequence type="displayed"/>
    </isoform>
    <text>A number of isoforms are produced. According to EST sequences.</text>
</comment>
<comment type="induction">
    <text evidence="4">By light. Down-regulated by sucrose in the dark.</text>
</comment>
<comment type="PTM">
    <text evidence="1">4'-phosphopantetheine is transferred from CoA to a specific serine of apo-ACP by acpS. This modification is essential for activity because fatty acids are bound in thioester linkage to the sulfhydryl of the prosthetic group (By similarity).</text>
</comment>
<comment type="disruption phenotype">
    <text evidence="6">Small and chlorotic plants with altered cuticule and reduced levels of fatty acids in leaves.</text>
</comment>
<comment type="similarity">
    <text evidence="7">Belongs to the acyl carrier protein (ACP) family.</text>
</comment>